<accession>O04887</accession>
<accession>O04889</accession>
<feature type="signal peptide" evidence="2">
    <location>
        <begin position="1"/>
        <end position="19"/>
    </location>
</feature>
<feature type="chain" id="PRO_0000023481" description="Pectinesterase 2">
    <location>
        <begin position="20"/>
        <end position="510"/>
    </location>
</feature>
<feature type="active site" description="Proton donor" evidence="3">
    <location>
        <position position="328"/>
    </location>
</feature>
<feature type="active site" description="Nucleophile" evidence="3">
    <location>
        <position position="349"/>
    </location>
</feature>
<feature type="binding site" evidence="1">
    <location>
        <position position="275"/>
    </location>
    <ligand>
        <name>substrate</name>
    </ligand>
</feature>
<feature type="binding site" evidence="1">
    <location>
        <position position="305"/>
    </location>
    <ligand>
        <name>substrate</name>
    </ligand>
</feature>
<feature type="binding site" evidence="1">
    <location>
        <position position="416"/>
    </location>
    <ligand>
        <name>substrate</name>
    </ligand>
</feature>
<feature type="binding site" evidence="1">
    <location>
        <position position="418"/>
    </location>
    <ligand>
        <name>substrate</name>
    </ligand>
</feature>
<feature type="site" description="Transition state stabilizer" evidence="1">
    <location>
        <position position="327"/>
    </location>
</feature>
<feature type="glycosylation site" description="N-linked (GlcNAc...) asparagine" evidence="2">
    <location>
        <position position="110"/>
    </location>
</feature>
<feature type="glycosylation site" description="N-linked (GlcNAc...) asparagine" evidence="2">
    <location>
        <position position="158"/>
    </location>
</feature>
<feature type="glycosylation site" description="N-linked (GlcNAc...) asparagine" evidence="2">
    <location>
        <position position="371"/>
    </location>
</feature>
<feature type="glycosylation site" description="N-linked (GlcNAc...) asparagine" evidence="2">
    <location>
        <position position="385"/>
    </location>
</feature>
<feature type="disulfide bond" evidence="1">
    <location>
        <begin position="342"/>
        <end position="362"/>
    </location>
</feature>
<feature type="sequence conflict" description="In Ref. 1; AAB57671." evidence="5" ref="1">
    <original>T</original>
    <variation>S</variation>
    <location>
        <position position="130"/>
    </location>
</feature>
<feature type="sequence conflict" description="In Ref. 1; AAB57671." evidence="5" ref="1">
    <original>T</original>
    <variation>A</variation>
    <location>
        <position position="166"/>
    </location>
</feature>
<feature type="sequence conflict" description="In Ref. 1; AAB57671." evidence="5" ref="1">
    <original>S</original>
    <variation>N</variation>
    <location>
        <position position="387"/>
    </location>
</feature>
<organism>
    <name type="scientific">Citrus sinensis</name>
    <name type="common">Sweet orange</name>
    <name type="synonym">Citrus aurantium var. sinensis</name>
    <dbReference type="NCBI Taxonomy" id="2711"/>
    <lineage>
        <taxon>Eukaryota</taxon>
        <taxon>Viridiplantae</taxon>
        <taxon>Streptophyta</taxon>
        <taxon>Embryophyta</taxon>
        <taxon>Tracheophyta</taxon>
        <taxon>Spermatophyta</taxon>
        <taxon>Magnoliopsida</taxon>
        <taxon>eudicotyledons</taxon>
        <taxon>Gunneridae</taxon>
        <taxon>Pentapetalae</taxon>
        <taxon>rosids</taxon>
        <taxon>malvids</taxon>
        <taxon>Sapindales</taxon>
        <taxon>Rutaceae</taxon>
        <taxon>Aurantioideae</taxon>
        <taxon>Citrus</taxon>
    </lineage>
</organism>
<keyword id="KW-0063">Aspartyl esterase</keyword>
<keyword id="KW-0134">Cell wall</keyword>
<keyword id="KW-0961">Cell wall biogenesis/degradation</keyword>
<keyword id="KW-1015">Disulfide bond</keyword>
<keyword id="KW-0325">Glycoprotein</keyword>
<keyword id="KW-0378">Hydrolase</keyword>
<keyword id="KW-0964">Secreted</keyword>
<keyword id="KW-0732">Signal</keyword>
<gene>
    <name type="primary">PECS-2.1</name>
</gene>
<name>PME2_CITSI</name>
<reference key="1">
    <citation type="journal article" date="1998" name="Physiol. Plantarum">
        <title>Genetics and expression of two pectinesterase genes in Valencia orange.</title>
        <authorList>
            <person name="Nairn C.J."/>
            <person name="Lewandowski D.J."/>
            <person name="Burns J.K."/>
        </authorList>
    </citation>
    <scope>NUCLEOTIDE SEQUENCE [GENOMIC DNA / MRNA]</scope>
    <scope>TISSUE SPECIFICITY</scope>
    <scope>INDUCTION</scope>
    <source>
        <strain>cv. Valencia</strain>
    </source>
</reference>
<proteinExistence type="evidence at transcript level"/>
<evidence type="ECO:0000250" key="1"/>
<evidence type="ECO:0000255" key="2"/>
<evidence type="ECO:0000255" key="3">
    <source>
        <dbReference type="PROSITE-ProRule" id="PRU10040"/>
    </source>
</evidence>
<evidence type="ECO:0000269" key="4">
    <source ref="1"/>
</evidence>
<evidence type="ECO:0000305" key="5"/>
<comment type="function">
    <text evidence="1">Acts in the modification of cell walls via demethylesterification of cell wall pectin.</text>
</comment>
<comment type="catalytic activity">
    <reaction>
        <text>[(1-&gt;4)-alpha-D-galacturonosyl methyl ester](n) + n H2O = [(1-&gt;4)-alpha-D-galacturonosyl](n) + n methanol + n H(+)</text>
        <dbReference type="Rhea" id="RHEA:22380"/>
        <dbReference type="Rhea" id="RHEA-COMP:14570"/>
        <dbReference type="Rhea" id="RHEA-COMP:14573"/>
        <dbReference type="ChEBI" id="CHEBI:15377"/>
        <dbReference type="ChEBI" id="CHEBI:15378"/>
        <dbReference type="ChEBI" id="CHEBI:17790"/>
        <dbReference type="ChEBI" id="CHEBI:140522"/>
        <dbReference type="ChEBI" id="CHEBI:140523"/>
        <dbReference type="EC" id="3.1.1.11"/>
    </reaction>
</comment>
<comment type="pathway">
    <text>Glycan metabolism; pectin degradation; 2-dehydro-3-deoxy-D-gluconate from pectin: step 1/5.</text>
</comment>
<comment type="subcellular location">
    <subcellularLocation>
        <location evidence="5">Secreted</location>
        <location evidence="5">Cell wall</location>
    </subcellularLocation>
</comment>
<comment type="tissue specificity">
    <text evidence="4">Expressed at low levels in young leaves, young bark, young fruit, mature fruit vesicles, shoots and flower buds, young bark and juice vesicles. In both leaf and fruit abscission zones, and mature leaves, expression was initially undetectable but increased markedly following ethylene treatment.</text>
</comment>
<comment type="induction">
    <text evidence="4">By ethylene.</text>
</comment>
<comment type="miscellaneous">
    <text>The PMEI region may act as an autoinhibitory domain and prevent untimely PME activity during transport.</text>
</comment>
<comment type="similarity">
    <text evidence="5">In the N-terminal section; belongs to the PMEI family.</text>
</comment>
<comment type="similarity">
    <text evidence="5">In the C-terminal section; belongs to the pectinesterase family.</text>
</comment>
<protein>
    <recommendedName>
        <fullName>Pectinesterase 2</fullName>
        <shortName>PE 2</shortName>
        <ecNumber>3.1.1.11</ecNumber>
    </recommendedName>
    <alternativeName>
        <fullName>Pectin methylesterase</fullName>
    </alternativeName>
</protein>
<sequence length="510" mass="56328">MALRILITVSLVLFSLSHTSFGYSPEEVKSWCGKTPNPQPCEYFLTQKTDVTSIKQDTDFYKISLQLALERATTAQSRTYTLGSKCRNEREKAAWEDCRELYELTVLKLNQTSNSSPGCTKVDKQTWLSTALTNLETCRASLEDLGVPEYVLPLLSNNVTKLISNTLSLNKVPYNEPSYKDGFPTWVKPGDRKLLQTTPRANIVVAQDGSGNVKTIQEAVAAASRAGGSRYVIYIKAGTYNENIEVKLKNIMFVGDGIGKTIITGSKSVGGGATTFKSATVAVVGDNFIARDITIRNTAGPNNHQAVALRSGSDLSVFYRCSFEGYQDTLYVHSQRQFYRECDIYGTVDFIFGNAAVVLQNCNIFARKPPNRTNTLTAQGRTDPNQSTGIIIHNCRVTAASDLKPVQSSVKTFLGRPWKQYSRTVYIKTFLDSLINPAGWMEWSGDFALNTLYYAEYMNTGPGSSTANRVKWRGYHVLTSPSQVSQFTVGNFIAGNSWLPATNVPFTSGL</sequence>
<dbReference type="EC" id="3.1.1.11"/>
<dbReference type="EMBL" id="U82975">
    <property type="protein sequence ID" value="AAB57669.1"/>
    <property type="molecule type" value="Genomic_DNA"/>
</dbReference>
<dbReference type="EMBL" id="U82977">
    <property type="protein sequence ID" value="AAB57671.1"/>
    <property type="molecule type" value="mRNA"/>
</dbReference>
<dbReference type="PIR" id="T10491">
    <property type="entry name" value="T10491"/>
</dbReference>
<dbReference type="PIR" id="T10494">
    <property type="entry name" value="T10494"/>
</dbReference>
<dbReference type="RefSeq" id="NP_001275775.1">
    <property type="nucleotide sequence ID" value="NM_001288846.1"/>
</dbReference>
<dbReference type="SMR" id="O04887"/>
<dbReference type="GlyCosmos" id="O04887">
    <property type="glycosylation" value="4 sites, No reported glycans"/>
</dbReference>
<dbReference type="PaxDb" id="2711-XP_006490884.1"/>
<dbReference type="GeneID" id="102577945"/>
<dbReference type="KEGG" id="cit:102577945"/>
<dbReference type="eggNOG" id="ENOG502QSQ4">
    <property type="taxonomic scope" value="Eukaryota"/>
</dbReference>
<dbReference type="OrthoDB" id="785528at71240"/>
<dbReference type="UniPathway" id="UPA00545">
    <property type="reaction ID" value="UER00823"/>
</dbReference>
<dbReference type="GO" id="GO:0005576">
    <property type="term" value="C:extracellular region"/>
    <property type="evidence" value="ECO:0007669"/>
    <property type="project" value="UniProtKB-KW"/>
</dbReference>
<dbReference type="GO" id="GO:0004857">
    <property type="term" value="F:enzyme inhibitor activity"/>
    <property type="evidence" value="ECO:0007669"/>
    <property type="project" value="InterPro"/>
</dbReference>
<dbReference type="GO" id="GO:0030599">
    <property type="term" value="F:pectinesterase activity"/>
    <property type="evidence" value="ECO:0007669"/>
    <property type="project" value="UniProtKB-EC"/>
</dbReference>
<dbReference type="GO" id="GO:0042545">
    <property type="term" value="P:cell wall modification"/>
    <property type="evidence" value="ECO:0007669"/>
    <property type="project" value="InterPro"/>
</dbReference>
<dbReference type="GO" id="GO:0045490">
    <property type="term" value="P:pectin catabolic process"/>
    <property type="evidence" value="ECO:0007669"/>
    <property type="project" value="UniProtKB-UniPathway"/>
</dbReference>
<dbReference type="CDD" id="cd15798">
    <property type="entry name" value="PMEI-like_3"/>
    <property type="match status" value="1"/>
</dbReference>
<dbReference type="FunFam" id="2.160.20.10:FF:000001">
    <property type="entry name" value="Pectinesterase"/>
    <property type="match status" value="1"/>
</dbReference>
<dbReference type="Gene3D" id="1.20.140.40">
    <property type="entry name" value="Invertase/pectin methylesterase inhibitor family protein"/>
    <property type="match status" value="1"/>
</dbReference>
<dbReference type="Gene3D" id="2.160.20.10">
    <property type="entry name" value="Single-stranded right-handed beta-helix, Pectin lyase-like"/>
    <property type="match status" value="1"/>
</dbReference>
<dbReference type="InterPro" id="IPR006633">
    <property type="entry name" value="Carb-bd_sugar_hydrolysis-dom"/>
</dbReference>
<dbReference type="InterPro" id="IPR035513">
    <property type="entry name" value="Invertase/methylesterase_inhib"/>
</dbReference>
<dbReference type="InterPro" id="IPR012334">
    <property type="entry name" value="Pectin_lyas_fold"/>
</dbReference>
<dbReference type="InterPro" id="IPR011050">
    <property type="entry name" value="Pectin_lyase_fold/virulence"/>
</dbReference>
<dbReference type="InterPro" id="IPR033131">
    <property type="entry name" value="Pectinesterase_Asp_AS"/>
</dbReference>
<dbReference type="InterPro" id="IPR000070">
    <property type="entry name" value="Pectinesterase_cat"/>
</dbReference>
<dbReference type="InterPro" id="IPR006501">
    <property type="entry name" value="Pectinesterase_inhib_dom"/>
</dbReference>
<dbReference type="InterPro" id="IPR018040">
    <property type="entry name" value="Pectinesterase_Tyr_AS"/>
</dbReference>
<dbReference type="NCBIfam" id="TIGR01614">
    <property type="entry name" value="PME_inhib"/>
    <property type="match status" value="1"/>
</dbReference>
<dbReference type="PANTHER" id="PTHR31707">
    <property type="entry name" value="PECTINESTERASE"/>
    <property type="match status" value="1"/>
</dbReference>
<dbReference type="Pfam" id="PF01095">
    <property type="entry name" value="Pectinesterase"/>
    <property type="match status" value="1"/>
</dbReference>
<dbReference type="Pfam" id="PF04043">
    <property type="entry name" value="PMEI"/>
    <property type="match status" value="1"/>
</dbReference>
<dbReference type="SMART" id="SM00722">
    <property type="entry name" value="CASH"/>
    <property type="match status" value="1"/>
</dbReference>
<dbReference type="SMART" id="SM00856">
    <property type="entry name" value="PMEI"/>
    <property type="match status" value="1"/>
</dbReference>
<dbReference type="SUPFAM" id="SSF51126">
    <property type="entry name" value="Pectin lyase-like"/>
    <property type="match status" value="1"/>
</dbReference>
<dbReference type="SUPFAM" id="SSF101148">
    <property type="entry name" value="Plant invertase/pectin methylesterase inhibitor"/>
    <property type="match status" value="1"/>
</dbReference>
<dbReference type="PROSITE" id="PS00800">
    <property type="entry name" value="PECTINESTERASE_1"/>
    <property type="match status" value="1"/>
</dbReference>
<dbReference type="PROSITE" id="PS00503">
    <property type="entry name" value="PECTINESTERASE_2"/>
    <property type="match status" value="1"/>
</dbReference>